<gene>
    <name type="primary">hegI1</name>
    <name type="synonym">rnl</name>
</gene>
<geneLocation type="mitochondrion"/>
<evidence type="ECO:0000250" key="1"/>
<evidence type="ECO:0000305" key="2"/>
<dbReference type="EC" id="3.1.-.-"/>
<dbReference type="EMBL" id="DQ157700">
    <property type="protein sequence ID" value="AAZ67020.1"/>
    <property type="molecule type" value="Genomic_DNA"/>
</dbReference>
<dbReference type="EMBL" id="AACP01000277">
    <property type="status" value="NOT_ANNOTATED_CDS"/>
    <property type="molecule type" value="Genomic_DNA"/>
</dbReference>
<dbReference type="RefSeq" id="YP_762679.1">
    <property type="nucleotide sequence ID" value="NC_008368.1"/>
</dbReference>
<dbReference type="SMR" id="Q0H8Z3"/>
<dbReference type="GeneID" id="4308286"/>
<dbReference type="InParanoid" id="Q0H8Z3"/>
<dbReference type="Proteomes" id="UP000000561">
    <property type="component" value="Mitochondrion"/>
</dbReference>
<dbReference type="GO" id="GO:0005739">
    <property type="term" value="C:mitochondrion"/>
    <property type="evidence" value="ECO:0007669"/>
    <property type="project" value="UniProtKB-SubCell"/>
</dbReference>
<dbReference type="GO" id="GO:0004519">
    <property type="term" value="F:endonuclease activity"/>
    <property type="evidence" value="ECO:0007669"/>
    <property type="project" value="UniProtKB-KW"/>
</dbReference>
<dbReference type="GO" id="GO:0006314">
    <property type="term" value="P:intron homing"/>
    <property type="evidence" value="ECO:0007669"/>
    <property type="project" value="UniProtKB-KW"/>
</dbReference>
<dbReference type="Gene3D" id="3.10.28.10">
    <property type="entry name" value="Homing endonucleases"/>
    <property type="match status" value="2"/>
</dbReference>
<dbReference type="InterPro" id="IPR027434">
    <property type="entry name" value="Homing_endonucl"/>
</dbReference>
<dbReference type="InterPro" id="IPR004860">
    <property type="entry name" value="LAGLIDADG_dom"/>
</dbReference>
<dbReference type="InterPro" id="IPR051289">
    <property type="entry name" value="LAGLIDADG_Endonuclease"/>
</dbReference>
<dbReference type="PANTHER" id="PTHR36181">
    <property type="entry name" value="INTRON-ENCODED ENDONUCLEASE AI3-RELATED"/>
    <property type="match status" value="1"/>
</dbReference>
<dbReference type="PANTHER" id="PTHR36181:SF2">
    <property type="entry name" value="INTRON-ENCODED ENDONUCLEASE AI3-RELATED"/>
    <property type="match status" value="1"/>
</dbReference>
<dbReference type="Pfam" id="PF00961">
    <property type="entry name" value="LAGLIDADG_1"/>
    <property type="match status" value="2"/>
</dbReference>
<dbReference type="SUPFAM" id="SSF55608">
    <property type="entry name" value="Homing endonucleases"/>
    <property type="match status" value="2"/>
</dbReference>
<organism>
    <name type="scientific">Mycosarcoma maydis</name>
    <name type="common">Corn smut fungus</name>
    <name type="synonym">Ustilago maydis</name>
    <dbReference type="NCBI Taxonomy" id="5270"/>
    <lineage>
        <taxon>Eukaryota</taxon>
        <taxon>Fungi</taxon>
        <taxon>Dikarya</taxon>
        <taxon>Basidiomycota</taxon>
        <taxon>Ustilaginomycotina</taxon>
        <taxon>Ustilaginomycetes</taxon>
        <taxon>Ustilaginales</taxon>
        <taxon>Ustilaginaceae</taxon>
        <taxon>Mycosarcoma</taxon>
    </lineage>
</organism>
<comment type="function">
    <text evidence="1">Mitochondrial DNA endonuclease involved in intron homing.</text>
</comment>
<comment type="subcellular location">
    <subcellularLocation>
        <location>Mitochondrion</location>
    </subcellularLocation>
</comment>
<comment type="miscellaneous">
    <text>Encoded within intron 1 (LRI1) of mitochondrial large subunit ribosomal RNA.</text>
</comment>
<comment type="similarity">
    <text evidence="2">Belongs to the LAGLIDADG endonuclease family.</text>
</comment>
<name>IEND1_MYCMD</name>
<protein>
    <recommendedName>
        <fullName>Probable intron-encoded DNA endonuclease 1</fullName>
        <ecNumber>3.1.-.-</ecNumber>
    </recommendedName>
</protein>
<proteinExistence type="inferred from homology"/>
<accession>Q0H8Z3</accession>
<keyword id="KW-0255">Endonuclease</keyword>
<keyword id="KW-0378">Hydrolase</keyword>
<keyword id="KW-0404">Intron homing</keyword>
<keyword id="KW-0496">Mitochondrion</keyword>
<keyword id="KW-0540">Nuclease</keyword>
<keyword id="KW-1185">Reference proteome</keyword>
<sequence length="268" mass="31301">MKTRLFNFTKWWLTGFTQADGGFVVNFDARKQGNLPYYPRPSFVLTQNIREEQMMIELHGVGKLYYSRNEINIVVRSQDDITNVIIPHFDNYSLRGHKLSSYFLFKEVVLMMNNGKHLSPFLQILELCYFTNHTTRRTLDTKKAILDKIYNKFGFVQFEPIIESNLSKPNSNPINNDYMVGLVDGDGSFNFGFKSTRRRIVPNFTIVQGVEDRSVLEDVQSYLDCGKVYDLQSQTSRYQVENVTDLVEKVLPEFKENKFNTTKKDYTL</sequence>
<reference key="1">
    <citation type="submission" date="2005-08" db="EMBL/GenBank/DDBJ databases">
        <title>Annotation of mitochondrial genome of Ustilago maydis and comparative analysis of basidiomycete mtDNAs.</title>
        <authorList>
            <person name="Kennell J.C."/>
            <person name="Boehmer C."/>
        </authorList>
    </citation>
    <scope>NUCLEOTIDE SEQUENCE [LARGE SCALE GENOMIC DNA]</scope>
    <source>
        <strain>DSM 14603 / FGSC 9021 / UM521</strain>
    </source>
</reference>
<reference key="2">
    <citation type="journal article" date="2006" name="Nature">
        <title>Insights from the genome of the biotrophic fungal plant pathogen Ustilago maydis.</title>
        <authorList>
            <person name="Kaemper J."/>
            <person name="Kahmann R."/>
            <person name="Boelker M."/>
            <person name="Ma L.-J."/>
            <person name="Brefort T."/>
            <person name="Saville B.J."/>
            <person name="Banuett F."/>
            <person name="Kronstad J.W."/>
            <person name="Gold S.E."/>
            <person name="Mueller O."/>
            <person name="Perlin M.H."/>
            <person name="Woesten H.A.B."/>
            <person name="de Vries R."/>
            <person name="Ruiz-Herrera J."/>
            <person name="Reynaga-Pena C.G."/>
            <person name="Snetselaar K."/>
            <person name="McCann M."/>
            <person name="Perez-Martin J."/>
            <person name="Feldbruegge M."/>
            <person name="Basse C.W."/>
            <person name="Steinberg G."/>
            <person name="Ibeas J.I."/>
            <person name="Holloman W."/>
            <person name="Guzman P."/>
            <person name="Farman M.L."/>
            <person name="Stajich J.E."/>
            <person name="Sentandreu R."/>
            <person name="Gonzalez-Prieto J.M."/>
            <person name="Kennell J.C."/>
            <person name="Molina L."/>
            <person name="Schirawski J."/>
            <person name="Mendoza-Mendoza A."/>
            <person name="Greilinger D."/>
            <person name="Muench K."/>
            <person name="Roessel N."/>
            <person name="Scherer M."/>
            <person name="Vranes M."/>
            <person name="Ladendorf O."/>
            <person name="Vincon V."/>
            <person name="Fuchs U."/>
            <person name="Sandrock B."/>
            <person name="Meng S."/>
            <person name="Ho E.C.H."/>
            <person name="Cahill M.J."/>
            <person name="Boyce K.J."/>
            <person name="Klose J."/>
            <person name="Klosterman S.J."/>
            <person name="Deelstra H.J."/>
            <person name="Ortiz-Castellanos L."/>
            <person name="Li W."/>
            <person name="Sanchez-Alonso P."/>
            <person name="Schreier P.H."/>
            <person name="Haeuser-Hahn I."/>
            <person name="Vaupel M."/>
            <person name="Koopmann E."/>
            <person name="Friedrich G."/>
            <person name="Voss H."/>
            <person name="Schlueter T."/>
            <person name="Margolis J."/>
            <person name="Platt D."/>
            <person name="Swimmer C."/>
            <person name="Gnirke A."/>
            <person name="Chen F."/>
            <person name="Vysotskaia V."/>
            <person name="Mannhaupt G."/>
            <person name="Gueldener U."/>
            <person name="Muensterkoetter M."/>
            <person name="Haase D."/>
            <person name="Oesterheld M."/>
            <person name="Mewes H.-W."/>
            <person name="Mauceli E.W."/>
            <person name="DeCaprio D."/>
            <person name="Wade C.M."/>
            <person name="Butler J."/>
            <person name="Young S.K."/>
            <person name="Jaffe D.B."/>
            <person name="Calvo S.E."/>
            <person name="Nusbaum C."/>
            <person name="Galagan J.E."/>
            <person name="Birren B.W."/>
        </authorList>
    </citation>
    <scope>NUCLEOTIDE SEQUENCE [LARGE SCALE GENOMIC DNA]</scope>
    <source>
        <strain>DSM 14603 / FGSC 9021 / UM521</strain>
    </source>
</reference>
<feature type="chain" id="PRO_0000271166" description="Probable intron-encoded DNA endonuclease 1">
    <location>
        <begin position="1"/>
        <end position="268"/>
    </location>
</feature>